<keyword id="KW-1003">Cell membrane</keyword>
<keyword id="KW-0472">Membrane</keyword>
<keyword id="KW-1185">Reference proteome</keyword>
<keyword id="KW-0812">Transmembrane</keyword>
<keyword id="KW-1133">Transmembrane helix</keyword>
<comment type="subcellular location">
    <subcellularLocation>
        <location evidence="2">Cell membrane</location>
        <topology evidence="2">Multi-pass membrane protein</topology>
    </subcellularLocation>
</comment>
<name>Y1499_ARCFU</name>
<gene>
    <name type="ordered locus">AF_1499</name>
</gene>
<accession>O28773</accession>
<proteinExistence type="predicted"/>
<protein>
    <recommendedName>
        <fullName>Uncharacterized protein AF_1499</fullName>
    </recommendedName>
</protein>
<sequence length="234" mass="25611">MAALLFYISAIFVPEAIWLLWSFPHWETMHVWNSLSEIPTAYVTAFISGDALLAVIGFWVAAKLIRSGRDYAAHIQWIAGYFAFFFVLAHGWDGTGWQRFTWDPTVTGMPWEPGRTMWVDFATSNVAITLYAMALPTIVPMIAGGYIWLRNGHILAGLDGARASSLAVKGVAIYLLGVFVAFLMAACATVISLHLTTQAGMLVGVIVTITVAYALAFRRGGILQTAISRGFNLT</sequence>
<feature type="chain" id="PRO_0000128011" description="Uncharacterized protein AF_1499">
    <location>
        <begin position="1"/>
        <end position="234"/>
    </location>
</feature>
<feature type="transmembrane region" description="Helical" evidence="1">
    <location>
        <begin position="5"/>
        <end position="23"/>
    </location>
</feature>
<feature type="transmembrane region" description="Helical" evidence="1">
    <location>
        <begin position="38"/>
        <end position="60"/>
    </location>
</feature>
<feature type="transmembrane region" description="Helical" evidence="1">
    <location>
        <begin position="73"/>
        <end position="92"/>
    </location>
</feature>
<feature type="transmembrane region" description="Helical" evidence="1">
    <location>
        <begin position="127"/>
        <end position="149"/>
    </location>
</feature>
<feature type="transmembrane region" description="Helical" evidence="1">
    <location>
        <begin position="170"/>
        <end position="192"/>
    </location>
</feature>
<feature type="transmembrane region" description="Helical" evidence="1">
    <location>
        <begin position="197"/>
        <end position="217"/>
    </location>
</feature>
<evidence type="ECO:0000255" key="1"/>
<evidence type="ECO:0000305" key="2"/>
<reference key="1">
    <citation type="journal article" date="1997" name="Nature">
        <title>The complete genome sequence of the hyperthermophilic, sulphate-reducing archaeon Archaeoglobus fulgidus.</title>
        <authorList>
            <person name="Klenk H.-P."/>
            <person name="Clayton R.A."/>
            <person name="Tomb J.-F."/>
            <person name="White O."/>
            <person name="Nelson K.E."/>
            <person name="Ketchum K.A."/>
            <person name="Dodson R.J."/>
            <person name="Gwinn M.L."/>
            <person name="Hickey E.K."/>
            <person name="Peterson J.D."/>
            <person name="Richardson D.L."/>
            <person name="Kerlavage A.R."/>
            <person name="Graham D.E."/>
            <person name="Kyrpides N.C."/>
            <person name="Fleischmann R.D."/>
            <person name="Quackenbush J."/>
            <person name="Lee N.H."/>
            <person name="Sutton G.G."/>
            <person name="Gill S.R."/>
            <person name="Kirkness E.F."/>
            <person name="Dougherty B.A."/>
            <person name="McKenney K."/>
            <person name="Adams M.D."/>
            <person name="Loftus B.J."/>
            <person name="Peterson S.N."/>
            <person name="Reich C.I."/>
            <person name="McNeil L.K."/>
            <person name="Badger J.H."/>
            <person name="Glodek A."/>
            <person name="Zhou L."/>
            <person name="Overbeek R."/>
            <person name="Gocayne J.D."/>
            <person name="Weidman J.F."/>
            <person name="McDonald L.A."/>
            <person name="Utterback T.R."/>
            <person name="Cotton M.D."/>
            <person name="Spriggs T."/>
            <person name="Artiach P."/>
            <person name="Kaine B.P."/>
            <person name="Sykes S.M."/>
            <person name="Sadow P.W."/>
            <person name="D'Andrea K.P."/>
            <person name="Bowman C."/>
            <person name="Fujii C."/>
            <person name="Garland S.A."/>
            <person name="Mason T.M."/>
            <person name="Olsen G.J."/>
            <person name="Fraser C.M."/>
            <person name="Smith H.O."/>
            <person name="Woese C.R."/>
            <person name="Venter J.C."/>
        </authorList>
    </citation>
    <scope>NUCLEOTIDE SEQUENCE [LARGE SCALE GENOMIC DNA]</scope>
    <source>
        <strain>ATCC 49558 / DSM 4304 / JCM 9628 / NBRC 100126 / VC-16</strain>
    </source>
</reference>
<dbReference type="EMBL" id="AE000782">
    <property type="protein sequence ID" value="AAB89757.1"/>
    <property type="molecule type" value="Genomic_DNA"/>
</dbReference>
<dbReference type="PIR" id="B69437">
    <property type="entry name" value="B69437"/>
</dbReference>
<dbReference type="STRING" id="224325.AF_1499"/>
<dbReference type="PaxDb" id="224325-AF_1499"/>
<dbReference type="EnsemblBacteria" id="AAB89757">
    <property type="protein sequence ID" value="AAB89757"/>
    <property type="gene ID" value="AF_1499"/>
</dbReference>
<dbReference type="KEGG" id="afu:AF_1499"/>
<dbReference type="HOGENOM" id="CLU_989473_0_0_2"/>
<dbReference type="Proteomes" id="UP000002199">
    <property type="component" value="Chromosome"/>
</dbReference>
<dbReference type="GO" id="GO:0005886">
    <property type="term" value="C:plasma membrane"/>
    <property type="evidence" value="ECO:0007669"/>
    <property type="project" value="UniProtKB-SubCell"/>
</dbReference>
<organism>
    <name type="scientific">Archaeoglobus fulgidus (strain ATCC 49558 / DSM 4304 / JCM 9628 / NBRC 100126 / VC-16)</name>
    <dbReference type="NCBI Taxonomy" id="224325"/>
    <lineage>
        <taxon>Archaea</taxon>
        <taxon>Methanobacteriati</taxon>
        <taxon>Methanobacteriota</taxon>
        <taxon>Archaeoglobi</taxon>
        <taxon>Archaeoglobales</taxon>
        <taxon>Archaeoglobaceae</taxon>
        <taxon>Archaeoglobus</taxon>
    </lineage>
</organism>